<accession>Q65CJ7</accession>
<organism>
    <name type="scientific">Plectranthus scutellarioides</name>
    <name type="common">Coleus</name>
    <name type="synonym">Solenostemon scutellarioides</name>
    <dbReference type="NCBI Taxonomy" id="4142"/>
    <lineage>
        <taxon>Eukaryota</taxon>
        <taxon>Viridiplantae</taxon>
        <taxon>Streptophyta</taxon>
        <taxon>Embryophyta</taxon>
        <taxon>Tracheophyta</taxon>
        <taxon>Spermatophyta</taxon>
        <taxon>Magnoliopsida</taxon>
        <taxon>eudicotyledons</taxon>
        <taxon>Gunneridae</taxon>
        <taxon>Pentapetalae</taxon>
        <taxon>asterids</taxon>
        <taxon>lamiids</taxon>
        <taxon>Lamiales</taxon>
        <taxon>Lamiaceae</taxon>
        <taxon>Nepetoideae</taxon>
        <taxon>Ocimeae</taxon>
        <taxon>Plectranthinae</taxon>
        <taxon>Coleus</taxon>
    </lineage>
</organism>
<gene>
    <name type="primary">HPPR</name>
</gene>
<sequence>MEAIGVLMMCPMSTYLEQELDKRFKLFRYWTQPAQRDFLALQAESIRAVVGNSNAGADAELIDALPKLEIVSSFSVGLDKVDLIKCEEKGVRVTNTPDVLTDDVADLAIGLILAVLRRICECDKYVRRGAWKFGDFKLTTKFSGKRVGIIGLGRIGLAVAERAEAFDCPISYFSRSKKPNTNYTYYGSVVELASNSDILVVACPLTPETTHIINREVIDALGPKGVLINIGRGPHVDEPELVSALVEGRLGGAGLDVFEREPEVPEKLFGLENVVLLPHVGSGTVETRKVMADLVVGNLEAHFSGKPLLTPVV</sequence>
<comment type="function">
    <text evidence="2">Catalyzes the NAD(P)H-dependent reduction of 4-hydroxyphenylpyruvate to 4-hydroxyphenyllactate and 3,4-dihydroxyphenylpyruvate to 3,4-dihydroxyphenyllactate in the biosynthesis of rosmarinic acid. Rosmarinic acid is an ester of caffeic acid and 3,4-dihydroxyphenyllactic acid. NADP is the preferred substrate.</text>
</comment>
<comment type="catalytic activity">
    <reaction evidence="2">
        <text>(2R)-2-hydroxy-3-(4-hydroxyphenyl)propanoate + NAD(+) = 3-(4-hydroxyphenyl)pyruvate + NADH + H(+)</text>
        <dbReference type="Rhea" id="RHEA:10780"/>
        <dbReference type="ChEBI" id="CHEBI:10980"/>
        <dbReference type="ChEBI" id="CHEBI:15378"/>
        <dbReference type="ChEBI" id="CHEBI:36242"/>
        <dbReference type="ChEBI" id="CHEBI:57540"/>
        <dbReference type="ChEBI" id="CHEBI:57945"/>
        <dbReference type="EC" id="1.1.1.237"/>
    </reaction>
</comment>
<comment type="catalytic activity">
    <reaction evidence="2">
        <text>(2R)-2-hydroxy-3-(4-hydroxyphenyl)propanoate + NADP(+) = 3-(4-hydroxyphenyl)pyruvate + NADPH + H(+)</text>
        <dbReference type="Rhea" id="RHEA:10776"/>
        <dbReference type="ChEBI" id="CHEBI:10980"/>
        <dbReference type="ChEBI" id="CHEBI:15378"/>
        <dbReference type="ChEBI" id="CHEBI:36242"/>
        <dbReference type="ChEBI" id="CHEBI:57783"/>
        <dbReference type="ChEBI" id="CHEBI:58349"/>
        <dbReference type="EC" id="1.1.1.237"/>
    </reaction>
</comment>
<comment type="catalytic activity">
    <reaction evidence="2">
        <text>(2R)-3-(3,4-dihydroxyphenyl)lactate + NADP(+) = 3-(3,4-dihydroxyphenyl)pyruvate + NADPH + H(+)</text>
        <dbReference type="Rhea" id="RHEA:57704"/>
        <dbReference type="ChEBI" id="CHEBI:15378"/>
        <dbReference type="ChEBI" id="CHEBI:29055"/>
        <dbReference type="ChEBI" id="CHEBI:57783"/>
        <dbReference type="ChEBI" id="CHEBI:58349"/>
        <dbReference type="ChEBI" id="CHEBI:71492"/>
        <dbReference type="EC" id="1.1.1.237"/>
    </reaction>
</comment>
<comment type="catalytic activity">
    <reaction evidence="2">
        <text>(2R)-3-(3,4-dihydroxyphenyl)lactate + NAD(+) = 3-(3,4-dihydroxyphenyl)pyruvate + NADH + H(+)</text>
        <dbReference type="Rhea" id="RHEA:57408"/>
        <dbReference type="ChEBI" id="CHEBI:15378"/>
        <dbReference type="ChEBI" id="CHEBI:29055"/>
        <dbReference type="ChEBI" id="CHEBI:57540"/>
        <dbReference type="ChEBI" id="CHEBI:57945"/>
        <dbReference type="ChEBI" id="CHEBI:71492"/>
        <dbReference type="EC" id="1.1.1.237"/>
    </reaction>
</comment>
<comment type="similarity">
    <text evidence="4">Belongs to the D-isomer specific 2-hydroxyacid dehydrogenase family.</text>
</comment>
<reference key="1">
    <citation type="journal article" date="2004" name="Plant Mol. Biol.">
        <title>Purification, cloning and functional expression of hydroxyphenylpyruvate reductase involved in rosmarinic acid biosynthesis in cell cultures of Coleus blumei.</title>
        <authorList>
            <person name="Kim K.H."/>
            <person name="Janiak V."/>
            <person name="Petersen M."/>
        </authorList>
    </citation>
    <scope>NUCLEOTIDE SEQUENCE [MRNA]</scope>
    <scope>PROTEIN SEQUENCE OF 37-65 AND 147-162</scope>
    <scope>FUNCTION</scope>
    <scope>CATALYTIC ACTIVITY</scope>
</reference>
<reference key="2">
    <citation type="journal article" date="2010" name="Acta Crystallogr. D">
        <title>Structure and substrate docking of a hydroxy(phenyl)pyruvate reductase from the higher plant Coleus blumei Benth.</title>
        <authorList>
            <person name="Janiak V."/>
            <person name="Petersen M."/>
            <person name="Zentgraf M."/>
            <person name="Klebe G."/>
            <person name="Heine A."/>
        </authorList>
    </citation>
    <scope>X-RAY CRYSTALLOGRAPHY (2.20 ANGSTROMS) IN COMPLEX WITH NADP</scope>
</reference>
<evidence type="ECO:0000250" key="1"/>
<evidence type="ECO:0000269" key="2">
    <source>
    </source>
</evidence>
<evidence type="ECO:0000269" key="3">
    <source>
    </source>
</evidence>
<evidence type="ECO:0000305" key="4"/>
<evidence type="ECO:0007829" key="5">
    <source>
        <dbReference type="PDB" id="3BA1"/>
    </source>
</evidence>
<keyword id="KW-0002">3D-structure</keyword>
<keyword id="KW-0903">Direct protein sequencing</keyword>
<keyword id="KW-0520">NAD</keyword>
<keyword id="KW-0521">NADP</keyword>
<keyword id="KW-0547">Nucleotide-binding</keyword>
<keyword id="KW-0560">Oxidoreductase</keyword>
<keyword id="KW-0670">Pyruvate</keyword>
<dbReference type="EC" id="1.1.1.237" evidence="2"/>
<dbReference type="EMBL" id="AJ507733">
    <property type="protein sequence ID" value="CAD47810.2"/>
    <property type="molecule type" value="mRNA"/>
</dbReference>
<dbReference type="PDB" id="3BA1">
    <property type="method" value="X-ray"/>
    <property type="resolution" value="1.47 A"/>
    <property type="chains" value="A=1-313"/>
</dbReference>
<dbReference type="PDB" id="3BAZ">
    <property type="method" value="X-ray"/>
    <property type="resolution" value="2.20 A"/>
    <property type="chains" value="A=1-313"/>
</dbReference>
<dbReference type="PDBsum" id="3BA1"/>
<dbReference type="PDBsum" id="3BAZ"/>
<dbReference type="SMR" id="Q65CJ7"/>
<dbReference type="KEGG" id="ag:CAD47810"/>
<dbReference type="BioCyc" id="MetaCyc:MONOMER-11763"/>
<dbReference type="BRENDA" id="1.1.1.237">
    <property type="organism ID" value="1561"/>
</dbReference>
<dbReference type="EvolutionaryTrace" id="Q65CJ7"/>
<dbReference type="GO" id="GO:0005829">
    <property type="term" value="C:cytosol"/>
    <property type="evidence" value="ECO:0007669"/>
    <property type="project" value="TreeGrafter"/>
</dbReference>
<dbReference type="GO" id="GO:0030267">
    <property type="term" value="F:glyoxylate reductase (NADPH) activity"/>
    <property type="evidence" value="ECO:0007669"/>
    <property type="project" value="TreeGrafter"/>
</dbReference>
<dbReference type="GO" id="GO:0047995">
    <property type="term" value="F:hydroxyphenylpyruvate reductase activity"/>
    <property type="evidence" value="ECO:0000314"/>
    <property type="project" value="UniProtKB"/>
</dbReference>
<dbReference type="GO" id="GO:0016618">
    <property type="term" value="F:hydroxypyruvate reductase [NAD(P)H] activity"/>
    <property type="evidence" value="ECO:0007669"/>
    <property type="project" value="TreeGrafter"/>
</dbReference>
<dbReference type="GO" id="GO:0051287">
    <property type="term" value="F:NAD binding"/>
    <property type="evidence" value="ECO:0007669"/>
    <property type="project" value="InterPro"/>
</dbReference>
<dbReference type="CDD" id="cd12156">
    <property type="entry name" value="HPPR"/>
    <property type="match status" value="1"/>
</dbReference>
<dbReference type="FunFam" id="3.40.50.720:FF:000213">
    <property type="entry name" value="Putative 2-hydroxyacid dehydrogenase"/>
    <property type="match status" value="1"/>
</dbReference>
<dbReference type="Gene3D" id="3.40.50.720">
    <property type="entry name" value="NAD(P)-binding Rossmann-like Domain"/>
    <property type="match status" value="2"/>
</dbReference>
<dbReference type="InterPro" id="IPR050223">
    <property type="entry name" value="D-isomer_2-hydroxyacid_DH"/>
</dbReference>
<dbReference type="InterPro" id="IPR006139">
    <property type="entry name" value="D-isomer_2_OHA_DH_cat_dom"/>
</dbReference>
<dbReference type="InterPro" id="IPR029752">
    <property type="entry name" value="D-isomer_DH_CS1"/>
</dbReference>
<dbReference type="InterPro" id="IPR006140">
    <property type="entry name" value="D-isomer_DH_NAD-bd"/>
</dbReference>
<dbReference type="InterPro" id="IPR036291">
    <property type="entry name" value="NAD(P)-bd_dom_sf"/>
</dbReference>
<dbReference type="PANTHER" id="PTHR10996:SF178">
    <property type="entry name" value="2-HYDROXYACID DEHYDROGENASE YGL185C-RELATED"/>
    <property type="match status" value="1"/>
</dbReference>
<dbReference type="PANTHER" id="PTHR10996">
    <property type="entry name" value="2-HYDROXYACID DEHYDROGENASE-RELATED"/>
    <property type="match status" value="1"/>
</dbReference>
<dbReference type="Pfam" id="PF00389">
    <property type="entry name" value="2-Hacid_dh"/>
    <property type="match status" value="1"/>
</dbReference>
<dbReference type="Pfam" id="PF02826">
    <property type="entry name" value="2-Hacid_dh_C"/>
    <property type="match status" value="1"/>
</dbReference>
<dbReference type="SUPFAM" id="SSF52283">
    <property type="entry name" value="Formate/glycerate dehydrogenase catalytic domain-like"/>
    <property type="match status" value="1"/>
</dbReference>
<dbReference type="SUPFAM" id="SSF51735">
    <property type="entry name" value="NAD(P)-binding Rossmann-fold domains"/>
    <property type="match status" value="1"/>
</dbReference>
<dbReference type="PROSITE" id="PS00065">
    <property type="entry name" value="D_2_HYDROXYACID_DH_1"/>
    <property type="match status" value="1"/>
</dbReference>
<name>HPPR_PLESU</name>
<protein>
    <recommendedName>
        <fullName>Hydroxyphenylpyruvate reductase</fullName>
        <shortName>HPPR</shortName>
        <ecNumber evidence="2">1.1.1.237</ecNumber>
    </recommendedName>
</protein>
<proteinExistence type="evidence at protein level"/>
<feature type="chain" id="PRO_0000422581" description="Hydroxyphenylpyruvate reductase">
    <location>
        <begin position="1"/>
        <end position="313"/>
    </location>
</feature>
<feature type="active site" evidence="1">
    <location>
        <position position="232"/>
    </location>
</feature>
<feature type="active site" evidence="1">
    <location>
        <position position="261"/>
    </location>
</feature>
<feature type="active site" description="Proton donor" evidence="1">
    <location>
        <position position="279"/>
    </location>
</feature>
<feature type="binding site" evidence="3">
    <location>
        <begin position="152"/>
        <end position="155"/>
    </location>
    <ligand>
        <name>NADP(+)</name>
        <dbReference type="ChEBI" id="CHEBI:58349"/>
    </ligand>
</feature>
<feature type="binding site" evidence="3">
    <location>
        <begin position="174"/>
        <end position="176"/>
    </location>
    <ligand>
        <name>NADP(+)</name>
        <dbReference type="ChEBI" id="CHEBI:58349"/>
    </ligand>
</feature>
<feature type="binding site" evidence="3">
    <location>
        <position position="230"/>
    </location>
    <ligand>
        <name>NADP(+)</name>
        <dbReference type="ChEBI" id="CHEBI:58349"/>
    </ligand>
</feature>
<feature type="binding site" evidence="3">
    <location>
        <position position="256"/>
    </location>
    <ligand>
        <name>NADP(+)</name>
        <dbReference type="ChEBI" id="CHEBI:58349"/>
    </ligand>
</feature>
<feature type="strand" evidence="5">
    <location>
        <begin position="5"/>
        <end position="8"/>
    </location>
</feature>
<feature type="helix" evidence="5">
    <location>
        <begin position="14"/>
        <end position="23"/>
    </location>
</feature>
<feature type="strand" evidence="5">
    <location>
        <begin position="24"/>
        <end position="28"/>
    </location>
</feature>
<feature type="helix" evidence="5">
    <location>
        <begin position="29"/>
        <end position="31"/>
    </location>
</feature>
<feature type="helix" evidence="5">
    <location>
        <begin position="35"/>
        <end position="42"/>
    </location>
</feature>
<feature type="turn" evidence="5">
    <location>
        <begin position="43"/>
        <end position="45"/>
    </location>
</feature>
<feature type="strand" evidence="5">
    <location>
        <begin position="46"/>
        <end position="51"/>
    </location>
</feature>
<feature type="strand" evidence="5">
    <location>
        <begin position="53"/>
        <end position="55"/>
    </location>
</feature>
<feature type="helix" evidence="5">
    <location>
        <begin position="59"/>
        <end position="64"/>
    </location>
</feature>
<feature type="strand" evidence="5">
    <location>
        <begin position="70"/>
        <end position="76"/>
    </location>
</feature>
<feature type="helix" evidence="5">
    <location>
        <begin position="83"/>
        <end position="89"/>
    </location>
</feature>
<feature type="strand" evidence="5">
    <location>
        <begin position="92"/>
        <end position="94"/>
    </location>
</feature>
<feature type="helix" evidence="5">
    <location>
        <begin position="101"/>
        <end position="116"/>
    </location>
</feature>
<feature type="helix" evidence="5">
    <location>
        <begin position="119"/>
        <end position="127"/>
    </location>
</feature>
<feature type="helix" evidence="5">
    <location>
        <begin position="130"/>
        <end position="133"/>
    </location>
</feature>
<feature type="strand" evidence="5">
    <location>
        <begin position="147"/>
        <end position="150"/>
    </location>
</feature>
<feature type="helix" evidence="5">
    <location>
        <begin position="154"/>
        <end position="164"/>
    </location>
</feature>
<feature type="turn" evidence="5">
    <location>
        <begin position="165"/>
        <end position="167"/>
    </location>
</feature>
<feature type="strand" evidence="5">
    <location>
        <begin position="170"/>
        <end position="173"/>
    </location>
</feature>
<feature type="strand" evidence="5">
    <location>
        <begin position="183"/>
        <end position="187"/>
    </location>
</feature>
<feature type="helix" evidence="5">
    <location>
        <begin position="189"/>
        <end position="194"/>
    </location>
</feature>
<feature type="strand" evidence="5">
    <location>
        <begin position="197"/>
        <end position="201"/>
    </location>
</feature>
<feature type="helix" evidence="5">
    <location>
        <begin position="207"/>
        <end position="209"/>
    </location>
</feature>
<feature type="helix" evidence="5">
    <location>
        <begin position="215"/>
        <end position="221"/>
    </location>
</feature>
<feature type="strand" evidence="5">
    <location>
        <begin position="226"/>
        <end position="229"/>
    </location>
</feature>
<feature type="helix" evidence="5">
    <location>
        <begin position="233"/>
        <end position="235"/>
    </location>
</feature>
<feature type="helix" evidence="5">
    <location>
        <begin position="238"/>
        <end position="246"/>
    </location>
</feature>
<feature type="strand" evidence="5">
    <location>
        <begin position="252"/>
        <end position="256"/>
    </location>
</feature>
<feature type="turn" evidence="5">
    <location>
        <begin position="259"/>
        <end position="262"/>
    </location>
</feature>
<feature type="helix" evidence="5">
    <location>
        <begin position="266"/>
        <end position="270"/>
    </location>
</feature>
<feature type="strand" evidence="5">
    <location>
        <begin position="274"/>
        <end position="276"/>
    </location>
</feature>
<feature type="helix" evidence="5">
    <location>
        <begin position="285"/>
        <end position="303"/>
    </location>
</feature>
<feature type="strand" evidence="5">
    <location>
        <begin position="309"/>
        <end position="311"/>
    </location>
</feature>